<organism>
    <name type="scientific">Saccharomyces cerevisiae (strain ATCC 204508 / S288c)</name>
    <name type="common">Baker's yeast</name>
    <dbReference type="NCBI Taxonomy" id="559292"/>
    <lineage>
        <taxon>Eukaryota</taxon>
        <taxon>Fungi</taxon>
        <taxon>Dikarya</taxon>
        <taxon>Ascomycota</taxon>
        <taxon>Saccharomycotina</taxon>
        <taxon>Saccharomycetes</taxon>
        <taxon>Saccharomycetales</taxon>
        <taxon>Saccharomycetaceae</taxon>
        <taxon>Saccharomyces</taxon>
    </lineage>
</organism>
<feature type="chain" id="PRO_0000173423" description="Vacuolar basic amino acid transporter 2">
    <location>
        <begin position="1"/>
        <end position="474"/>
    </location>
</feature>
<feature type="topological domain" description="Cytoplasmic" evidence="2">
    <location>
        <begin position="1"/>
        <end position="33"/>
    </location>
</feature>
<feature type="transmembrane region" description="Helical" evidence="2">
    <location>
        <begin position="34"/>
        <end position="54"/>
    </location>
</feature>
<feature type="topological domain" description="Vacuolar" evidence="2">
    <location>
        <begin position="55"/>
        <end position="62"/>
    </location>
</feature>
<feature type="transmembrane region" description="Helical" evidence="2">
    <location>
        <begin position="63"/>
        <end position="85"/>
    </location>
</feature>
<feature type="topological domain" description="Cytoplasmic" evidence="2">
    <location>
        <begin position="86"/>
        <end position="97"/>
    </location>
</feature>
<feature type="transmembrane region" description="Helical" evidence="2">
    <location>
        <begin position="98"/>
        <end position="118"/>
    </location>
</feature>
<feature type="topological domain" description="Vacuolar" evidence="2">
    <location>
        <begin position="119"/>
        <end position="121"/>
    </location>
</feature>
<feature type="transmembrane region" description="Helical" evidence="2">
    <location>
        <begin position="122"/>
        <end position="142"/>
    </location>
</feature>
<feature type="topological domain" description="Cytoplasmic" evidence="2">
    <location>
        <begin position="143"/>
        <end position="167"/>
    </location>
</feature>
<feature type="transmembrane region" description="Helical" evidence="2">
    <location>
        <begin position="168"/>
        <end position="188"/>
    </location>
</feature>
<feature type="topological domain" description="Vacuolar" evidence="2">
    <location>
        <begin position="189"/>
        <end position="196"/>
    </location>
</feature>
<feature type="transmembrane region" description="Helical" evidence="2">
    <location>
        <begin position="197"/>
        <end position="217"/>
    </location>
</feature>
<feature type="topological domain" description="Cytoplasmic" evidence="2">
    <location>
        <begin position="218"/>
        <end position="238"/>
    </location>
</feature>
<feature type="transmembrane region" description="Helical" evidence="2">
    <location>
        <begin position="239"/>
        <end position="259"/>
    </location>
</feature>
<feature type="topological domain" description="Vacuolar" evidence="2">
    <location>
        <begin position="260"/>
        <end position="273"/>
    </location>
</feature>
<feature type="transmembrane region" description="Helical" evidence="2">
    <location>
        <begin position="274"/>
        <end position="294"/>
    </location>
</feature>
<feature type="topological domain" description="Cytoplasmic" evidence="2">
    <location>
        <begin position="295"/>
        <end position="303"/>
    </location>
</feature>
<feature type="transmembrane region" description="Helical" evidence="2">
    <location>
        <begin position="304"/>
        <end position="324"/>
    </location>
</feature>
<feature type="topological domain" description="Vacuolar" evidence="2">
    <location>
        <begin position="325"/>
        <end position="331"/>
    </location>
</feature>
<feature type="transmembrane region" description="Helical" evidence="2">
    <location>
        <begin position="332"/>
        <end position="352"/>
    </location>
</feature>
<feature type="topological domain" description="Cytoplasmic" evidence="2">
    <location>
        <begin position="353"/>
        <end position="375"/>
    </location>
</feature>
<feature type="transmembrane region" description="Helical" evidence="2">
    <location>
        <begin position="376"/>
        <end position="396"/>
    </location>
</feature>
<feature type="topological domain" description="Vacuolar" evidence="2">
    <location>
        <begin position="397"/>
        <end position="447"/>
    </location>
</feature>
<feature type="transmembrane region" description="Helical" evidence="2">
    <location>
        <begin position="448"/>
        <end position="468"/>
    </location>
</feature>
<feature type="topological domain" description="Cytoplasmic" evidence="2">
    <location>
        <begin position="469"/>
        <end position="474"/>
    </location>
</feature>
<feature type="glycosylation site" description="N-linked (GlcNAc...) asparagine" evidence="2">
    <location>
        <position position="420"/>
    </location>
</feature>
<accession>P38358</accession>
<accession>D6VQT7</accession>
<dbReference type="EMBL" id="Z36162">
    <property type="protein sequence ID" value="CAA85258.1"/>
    <property type="molecule type" value="Genomic_DNA"/>
</dbReference>
<dbReference type="EMBL" id="AY692630">
    <property type="protein sequence ID" value="AAT92649.1"/>
    <property type="molecule type" value="Genomic_DNA"/>
</dbReference>
<dbReference type="EMBL" id="BK006936">
    <property type="protein sequence ID" value="DAA07407.1"/>
    <property type="molecule type" value="Genomic_DNA"/>
</dbReference>
<dbReference type="PIR" id="S46175">
    <property type="entry name" value="S46175"/>
</dbReference>
<dbReference type="RefSeq" id="NP_009852.3">
    <property type="nucleotide sequence ID" value="NM_001178641.3"/>
</dbReference>
<dbReference type="SMR" id="P38358"/>
<dbReference type="BioGRID" id="32986">
    <property type="interactions" value="53"/>
</dbReference>
<dbReference type="DIP" id="DIP-5142N"/>
<dbReference type="FunCoup" id="P38358">
    <property type="interactions" value="57"/>
</dbReference>
<dbReference type="IntAct" id="P38358">
    <property type="interactions" value="4"/>
</dbReference>
<dbReference type="MINT" id="P38358"/>
<dbReference type="STRING" id="4932.YBR293W"/>
<dbReference type="TCDB" id="2.A.1.48.2">
    <property type="family name" value="the major facilitator superfamily (mfs)"/>
</dbReference>
<dbReference type="GlyCosmos" id="P38358">
    <property type="glycosylation" value="1 site, No reported glycans"/>
</dbReference>
<dbReference type="GlyGen" id="P38358">
    <property type="glycosylation" value="1 site"/>
</dbReference>
<dbReference type="PaxDb" id="4932-YBR293W"/>
<dbReference type="PeptideAtlas" id="P38358"/>
<dbReference type="EnsemblFungi" id="YBR293W_mRNA">
    <property type="protein sequence ID" value="YBR293W"/>
    <property type="gene ID" value="YBR293W"/>
</dbReference>
<dbReference type="GeneID" id="852596"/>
<dbReference type="KEGG" id="sce:YBR293W"/>
<dbReference type="AGR" id="SGD:S000000497"/>
<dbReference type="SGD" id="S000000497">
    <property type="gene designation" value="VBA2"/>
</dbReference>
<dbReference type="VEuPathDB" id="FungiDB:YBR293W"/>
<dbReference type="eggNOG" id="KOG0254">
    <property type="taxonomic scope" value="Eukaryota"/>
</dbReference>
<dbReference type="HOGENOM" id="CLU_000960_22_3_1"/>
<dbReference type="InParanoid" id="P38358"/>
<dbReference type="OMA" id="TATITFM"/>
<dbReference type="OrthoDB" id="6770063at2759"/>
<dbReference type="BioCyc" id="YEAST:G3O-29211-MONOMER"/>
<dbReference type="BioGRID-ORCS" id="852596">
    <property type="hits" value="1 hit in 10 CRISPR screens"/>
</dbReference>
<dbReference type="PRO" id="PR:P38358"/>
<dbReference type="Proteomes" id="UP000002311">
    <property type="component" value="Chromosome II"/>
</dbReference>
<dbReference type="RNAct" id="P38358">
    <property type="molecule type" value="protein"/>
</dbReference>
<dbReference type="GO" id="GO:0005783">
    <property type="term" value="C:endoplasmic reticulum"/>
    <property type="evidence" value="ECO:0007005"/>
    <property type="project" value="SGD"/>
</dbReference>
<dbReference type="GO" id="GO:0000329">
    <property type="term" value="C:fungal-type vacuole membrane"/>
    <property type="evidence" value="ECO:0000314"/>
    <property type="project" value="SGD"/>
</dbReference>
<dbReference type="GO" id="GO:0015174">
    <property type="term" value="F:basic amino acid transmembrane transporter activity"/>
    <property type="evidence" value="ECO:0000314"/>
    <property type="project" value="SGD"/>
</dbReference>
<dbReference type="GO" id="GO:0015802">
    <property type="term" value="P:basic amino acid transport"/>
    <property type="evidence" value="ECO:0000315"/>
    <property type="project" value="SGD"/>
</dbReference>
<dbReference type="GO" id="GO:0055085">
    <property type="term" value="P:transmembrane transport"/>
    <property type="evidence" value="ECO:0000314"/>
    <property type="project" value="SGD"/>
</dbReference>
<dbReference type="FunFam" id="1.20.1720.10:FF:000022">
    <property type="entry name" value="MFS drug transporter, putative"/>
    <property type="match status" value="1"/>
</dbReference>
<dbReference type="FunFam" id="1.20.1250.20:FF:000717">
    <property type="entry name" value="Uncharacterized transporter C460.03"/>
    <property type="match status" value="1"/>
</dbReference>
<dbReference type="Gene3D" id="1.20.1250.20">
    <property type="entry name" value="MFS general substrate transporter like domains"/>
    <property type="match status" value="1"/>
</dbReference>
<dbReference type="Gene3D" id="1.20.1720.10">
    <property type="entry name" value="Multidrug resistance protein D"/>
    <property type="match status" value="1"/>
</dbReference>
<dbReference type="InterPro" id="IPR011701">
    <property type="entry name" value="MFS"/>
</dbReference>
<dbReference type="InterPro" id="IPR020846">
    <property type="entry name" value="MFS_dom"/>
</dbReference>
<dbReference type="InterPro" id="IPR036259">
    <property type="entry name" value="MFS_trans_sf"/>
</dbReference>
<dbReference type="PANTHER" id="PTHR23501">
    <property type="entry name" value="MAJOR FACILITATOR SUPERFAMILY"/>
    <property type="match status" value="1"/>
</dbReference>
<dbReference type="PANTHER" id="PTHR23501:SF81">
    <property type="entry name" value="VACUOLAR BASIC AMINO ACID TRANSPORTER 2"/>
    <property type="match status" value="1"/>
</dbReference>
<dbReference type="Pfam" id="PF07690">
    <property type="entry name" value="MFS_1"/>
    <property type="match status" value="1"/>
</dbReference>
<dbReference type="SUPFAM" id="SSF103473">
    <property type="entry name" value="MFS general substrate transporter"/>
    <property type="match status" value="1"/>
</dbReference>
<dbReference type="PROSITE" id="PS50850">
    <property type="entry name" value="MFS"/>
    <property type="match status" value="1"/>
</dbReference>
<protein>
    <recommendedName>
        <fullName>Vacuolar basic amino acid transporter 2</fullName>
    </recommendedName>
</protein>
<evidence type="ECO:0000250" key="1"/>
<evidence type="ECO:0000255" key="2"/>
<evidence type="ECO:0000269" key="3">
    <source>
    </source>
</evidence>
<evidence type="ECO:0000305" key="4"/>
<name>VBA2_YEAST</name>
<comment type="function">
    <text evidence="3">Transporter required for vacuolar uptake of histidine, arginine and lysine and to a lesser extent tyrosine.</text>
</comment>
<comment type="subcellular location">
    <subcellularLocation>
        <location evidence="1">Vacuole membrane</location>
        <topology evidence="1">Multi-pass membrane protein</topology>
    </subcellularLocation>
</comment>
<comment type="similarity">
    <text evidence="4">Belongs to the major facilitator superfamily.</text>
</comment>
<reference key="1">
    <citation type="journal article" date="1994" name="EMBO J.">
        <title>Complete DNA sequence of yeast chromosome II.</title>
        <authorList>
            <person name="Feldmann H."/>
            <person name="Aigle M."/>
            <person name="Aljinovic G."/>
            <person name="Andre B."/>
            <person name="Baclet M.C."/>
            <person name="Barthe C."/>
            <person name="Baur A."/>
            <person name="Becam A.-M."/>
            <person name="Biteau N."/>
            <person name="Boles E."/>
            <person name="Brandt T."/>
            <person name="Brendel M."/>
            <person name="Brueckner M."/>
            <person name="Bussereau F."/>
            <person name="Christiansen C."/>
            <person name="Contreras R."/>
            <person name="Crouzet M."/>
            <person name="Cziepluch C."/>
            <person name="Demolis N."/>
            <person name="Delaveau T."/>
            <person name="Doignon F."/>
            <person name="Domdey H."/>
            <person name="Duesterhus S."/>
            <person name="Dubois E."/>
            <person name="Dujon B."/>
            <person name="El Bakkoury M."/>
            <person name="Entian K.-D."/>
            <person name="Feuermann M."/>
            <person name="Fiers W."/>
            <person name="Fobo G.M."/>
            <person name="Fritz C."/>
            <person name="Gassenhuber J."/>
            <person name="Glansdorff N."/>
            <person name="Goffeau A."/>
            <person name="Grivell L.A."/>
            <person name="de Haan M."/>
            <person name="Hein C."/>
            <person name="Herbert C.J."/>
            <person name="Hollenberg C.P."/>
            <person name="Holmstroem K."/>
            <person name="Jacq C."/>
            <person name="Jacquet M."/>
            <person name="Jauniaux J.-C."/>
            <person name="Jonniaux J.-L."/>
            <person name="Kallesoee T."/>
            <person name="Kiesau P."/>
            <person name="Kirchrath L."/>
            <person name="Koetter P."/>
            <person name="Korol S."/>
            <person name="Liebl S."/>
            <person name="Logghe M."/>
            <person name="Lohan A.J.E."/>
            <person name="Louis E.J."/>
            <person name="Li Z.Y."/>
            <person name="Maat M.J."/>
            <person name="Mallet L."/>
            <person name="Mannhaupt G."/>
            <person name="Messenguy F."/>
            <person name="Miosga T."/>
            <person name="Molemans F."/>
            <person name="Mueller S."/>
            <person name="Nasr F."/>
            <person name="Obermaier B."/>
            <person name="Perea J."/>
            <person name="Pierard A."/>
            <person name="Piravandi E."/>
            <person name="Pohl F.M."/>
            <person name="Pohl T.M."/>
            <person name="Potier S."/>
            <person name="Proft M."/>
            <person name="Purnelle B."/>
            <person name="Ramezani Rad M."/>
            <person name="Rieger M."/>
            <person name="Rose M."/>
            <person name="Schaaff-Gerstenschlaeger I."/>
            <person name="Scherens B."/>
            <person name="Schwarzlose C."/>
            <person name="Skala J."/>
            <person name="Slonimski P.P."/>
            <person name="Smits P.H.M."/>
            <person name="Souciet J.-L."/>
            <person name="Steensma H.Y."/>
            <person name="Stucka R."/>
            <person name="Urrestarazu L.A."/>
            <person name="van der Aart Q.J.M."/>
            <person name="Van Dyck L."/>
            <person name="Vassarotti A."/>
            <person name="Vetter I."/>
            <person name="Vierendeels F."/>
            <person name="Vissers S."/>
            <person name="Wagner G."/>
            <person name="de Wergifosse P."/>
            <person name="Wolfe K.H."/>
            <person name="Zagulski M."/>
            <person name="Zimmermann F.K."/>
            <person name="Mewes H.-W."/>
            <person name="Kleine K."/>
        </authorList>
    </citation>
    <scope>NUCLEOTIDE SEQUENCE [LARGE SCALE GENOMIC DNA]</scope>
    <source>
        <strain>ATCC 204508 / S288c</strain>
    </source>
</reference>
<reference key="2">
    <citation type="journal article" date="2014" name="G3 (Bethesda)">
        <title>The reference genome sequence of Saccharomyces cerevisiae: Then and now.</title>
        <authorList>
            <person name="Engel S.R."/>
            <person name="Dietrich F.S."/>
            <person name="Fisk D.G."/>
            <person name="Binkley G."/>
            <person name="Balakrishnan R."/>
            <person name="Costanzo M.C."/>
            <person name="Dwight S.S."/>
            <person name="Hitz B.C."/>
            <person name="Karra K."/>
            <person name="Nash R.S."/>
            <person name="Weng S."/>
            <person name="Wong E.D."/>
            <person name="Lloyd P."/>
            <person name="Skrzypek M.S."/>
            <person name="Miyasato S.R."/>
            <person name="Simison M."/>
            <person name="Cherry J.M."/>
        </authorList>
    </citation>
    <scope>GENOME REANNOTATION</scope>
    <source>
        <strain>ATCC 204508 / S288c</strain>
    </source>
</reference>
<reference key="3">
    <citation type="journal article" date="2007" name="Genome Res.">
        <title>Approaching a complete repository of sequence-verified protein-encoding clones for Saccharomyces cerevisiae.</title>
        <authorList>
            <person name="Hu Y."/>
            <person name="Rolfs A."/>
            <person name="Bhullar B."/>
            <person name="Murthy T.V.S."/>
            <person name="Zhu C."/>
            <person name="Berger M.F."/>
            <person name="Camargo A.A."/>
            <person name="Kelley F."/>
            <person name="McCarron S."/>
            <person name="Jepson D."/>
            <person name="Richardson A."/>
            <person name="Raphael J."/>
            <person name="Moreira D."/>
            <person name="Taycher E."/>
            <person name="Zuo D."/>
            <person name="Mohr S."/>
            <person name="Kane M.F."/>
            <person name="Williamson J."/>
            <person name="Simpson A.J.G."/>
            <person name="Bulyk M.L."/>
            <person name="Harlow E."/>
            <person name="Marsischky G."/>
            <person name="Kolodner R.D."/>
            <person name="LaBaer J."/>
        </authorList>
    </citation>
    <scope>NUCLEOTIDE SEQUENCE [GENOMIC DNA]</scope>
    <source>
        <strain>ATCC 204508 / S288c</strain>
    </source>
</reference>
<reference key="4">
    <citation type="journal article" date="2005" name="J. Biol. Chem.">
        <title>A family of basic amino acid transporters of the vacuolar membrane from Saccharomyces cerevisiae.</title>
        <authorList>
            <person name="Shimazu M."/>
            <person name="Sekito T."/>
            <person name="Akiyama K."/>
            <person name="Ohsumi Y."/>
            <person name="Kakinuma Y."/>
        </authorList>
    </citation>
    <scope>FUNCTION</scope>
</reference>
<reference key="5">
    <citation type="journal article" date="2006" name="Proc. Natl. Acad. Sci. U.S.A.">
        <title>A global topology map of the Saccharomyces cerevisiae membrane proteome.</title>
        <authorList>
            <person name="Kim H."/>
            <person name="Melen K."/>
            <person name="Oesterberg M."/>
            <person name="von Heijne G."/>
        </authorList>
    </citation>
    <scope>TOPOLOGY [LARGE SCALE ANALYSIS]</scope>
    <source>
        <strain>ATCC 208353 / W303-1A</strain>
    </source>
</reference>
<keyword id="KW-0029">Amino-acid transport</keyword>
<keyword id="KW-0325">Glycoprotein</keyword>
<keyword id="KW-0472">Membrane</keyword>
<keyword id="KW-1185">Reference proteome</keyword>
<keyword id="KW-0812">Transmembrane</keyword>
<keyword id="KW-1133">Transmembrane helix</keyword>
<keyword id="KW-0813">Transport</keyword>
<keyword id="KW-0926">Vacuole</keyword>
<sequence length="474" mass="51677">MSISNWITTAYLITSTSFQPLYGSFSDALGRRNCLFFANGAFTIGCLACGFSKNIYMLSFMRALTGIGGGGLITLSTIVNSDVIPSSKRGIFQAFQNLLLGFGAICGASFGGTIASSIGWRWCFLIQVPISVISSILMNYYVPNQKEYNRQNSSIFQNPGKILRDIDVMGSILIITGLTLQLLYLSLGCSTSKLSWTSPSVLLLLVGSVIILLLFILHERKTSARAIIPMELVNSSYSVVVLSISILVGFASYAYLFTLPLFFQIVLGDSTAKAGLRLTIPSLFTPVGSLITGFSMSKYNCLRLLLYIGISLMFLGNFLFLFIEKTSPNWLIGLFLIPANLGQGITFPTTLFTFIFMFSKSDQATATSTLYLFRSIGSVWGVAISAGVIQLSFAGLLRSNLKGLLDENKIKKLIVQLSANSSYIGSLHGEVKNTVIKSFDEATKRAHLMSTLLSSLALILCILKDNLAKPKTRR</sequence>
<proteinExistence type="evidence at protein level"/>
<gene>
    <name type="primary">VBA2</name>
    <name type="ordered locus">YBR293W</name>
    <name type="ORF">YBR2109</name>
</gene>